<name>GLNB_RHOCA</name>
<organism>
    <name type="scientific">Rhodobacter capsulatus</name>
    <name type="common">Rhodopseudomonas capsulata</name>
    <dbReference type="NCBI Taxonomy" id="1061"/>
    <lineage>
        <taxon>Bacteria</taxon>
        <taxon>Pseudomonadati</taxon>
        <taxon>Pseudomonadota</taxon>
        <taxon>Alphaproteobacteria</taxon>
        <taxon>Rhodobacterales</taxon>
        <taxon>Rhodobacter group</taxon>
        <taxon>Rhodobacter</taxon>
    </lineage>
</organism>
<keyword id="KW-0535">Nitrogen fixation</keyword>
<keyword id="KW-0547">Nucleotide-binding</keyword>
<keyword id="KW-0597">Phosphoprotein</keyword>
<keyword id="KW-0804">Transcription</keyword>
<keyword id="KW-0805">Transcription regulation</keyword>
<reference key="1">
    <citation type="journal article" date="1990" name="J. Bacteriol.">
        <title>Inactivation, sequence, and lacZ fusion analysis of a regulatory locus required for repression of nitrogen fixation genes in Rhodobacter capsulatus.</title>
        <authorList>
            <person name="Kranz R.G."/>
            <person name="Pace V.M."/>
            <person name="Caldicott I.M."/>
        </authorList>
    </citation>
    <scope>NUCLEOTIDE SEQUENCE [GENOMIC DNA]</scope>
</reference>
<protein>
    <recommendedName>
        <fullName>Nitrogen regulatory protein P-II</fullName>
    </recommendedName>
</protein>
<feature type="chain" id="PRO_0000139786" description="Nitrogen regulatory protein P-II">
    <location>
        <begin position="1"/>
        <end position="112"/>
    </location>
</feature>
<feature type="modified residue" description="O-UMP-tyrosine" evidence="2">
    <location>
        <position position="51"/>
    </location>
</feature>
<gene>
    <name type="primary">glnB</name>
</gene>
<sequence length="112" mass="12300">MKKVEAIIKPFKLDEVKEALQEAGIQGLSVIEVKGFGRQKGHTELYRGAEYVVDFLPKVKIEMVLPDEMVDIAIEAIVGAARTEKIGDGKIFVSSIEQAIRIRTGETGEDAV</sequence>
<comment type="function">
    <text>P-II indirectly controls the transcription of the glutamine synthetase gene (glnA). P-II prevents NR-II-catalyzed conversion of NR-I to NR-I-phosphate, the transcriptional activator of glnA. When P-II is uridylylated to P-II-UMP, these events are reversed. When the ratio of Gln to 2-ketoglutarate decreases, P-II is uridylylated to P-II-UMP, which causes the deadenylation of glutamine synthetase, so activating the enzyme.</text>
</comment>
<comment type="subunit">
    <text evidence="1">Homotrimer.</text>
</comment>
<comment type="similarity">
    <text evidence="2">Belongs to the P(II) protein family.</text>
</comment>
<dbReference type="EMBL" id="U25953">
    <property type="protein sequence ID" value="AAA87024.1"/>
    <property type="molecule type" value="Genomic_DNA"/>
</dbReference>
<dbReference type="EMBL" id="M28244">
    <property type="protein sequence ID" value="AAA26122.1"/>
    <property type="molecule type" value="Genomic_DNA"/>
</dbReference>
<dbReference type="RefSeq" id="WP_013067397.1">
    <property type="nucleotide sequence ID" value="NZ_VIBE01000013.1"/>
</dbReference>
<dbReference type="SMR" id="P13556"/>
<dbReference type="IntAct" id="P13556">
    <property type="interactions" value="3"/>
</dbReference>
<dbReference type="OMA" id="YRGTEHV"/>
<dbReference type="OrthoDB" id="9802729at2"/>
<dbReference type="GO" id="GO:0005829">
    <property type="term" value="C:cytosol"/>
    <property type="evidence" value="ECO:0007669"/>
    <property type="project" value="TreeGrafter"/>
</dbReference>
<dbReference type="GO" id="GO:0005524">
    <property type="term" value="F:ATP binding"/>
    <property type="evidence" value="ECO:0007669"/>
    <property type="project" value="TreeGrafter"/>
</dbReference>
<dbReference type="GO" id="GO:0030234">
    <property type="term" value="F:enzyme regulator activity"/>
    <property type="evidence" value="ECO:0007669"/>
    <property type="project" value="InterPro"/>
</dbReference>
<dbReference type="GO" id="GO:0009399">
    <property type="term" value="P:nitrogen fixation"/>
    <property type="evidence" value="ECO:0007669"/>
    <property type="project" value="UniProtKB-KW"/>
</dbReference>
<dbReference type="GO" id="GO:0006808">
    <property type="term" value="P:regulation of nitrogen utilization"/>
    <property type="evidence" value="ECO:0000315"/>
    <property type="project" value="CACAO"/>
</dbReference>
<dbReference type="FunFam" id="3.30.70.120:FF:000001">
    <property type="entry name" value="Nitrogen regulatory protein P-II"/>
    <property type="match status" value="1"/>
</dbReference>
<dbReference type="Gene3D" id="3.30.70.120">
    <property type="match status" value="1"/>
</dbReference>
<dbReference type="InterPro" id="IPR002187">
    <property type="entry name" value="N-reg_PII"/>
</dbReference>
<dbReference type="InterPro" id="IPR011322">
    <property type="entry name" value="N-reg_PII-like_a/b"/>
</dbReference>
<dbReference type="InterPro" id="IPR015867">
    <property type="entry name" value="N-reg_PII/ATP_PRibTrfase_C"/>
</dbReference>
<dbReference type="InterPro" id="IPR017918">
    <property type="entry name" value="N-reg_PII_CS"/>
</dbReference>
<dbReference type="InterPro" id="IPR002332">
    <property type="entry name" value="N-reg_PII_urydylation_site"/>
</dbReference>
<dbReference type="PANTHER" id="PTHR30115">
    <property type="entry name" value="NITROGEN REGULATORY PROTEIN P-II"/>
    <property type="match status" value="1"/>
</dbReference>
<dbReference type="PANTHER" id="PTHR30115:SF11">
    <property type="entry name" value="NITROGEN REGULATORY PROTEIN P-II HOMOLOG"/>
    <property type="match status" value="1"/>
</dbReference>
<dbReference type="Pfam" id="PF00543">
    <property type="entry name" value="P-II"/>
    <property type="match status" value="1"/>
</dbReference>
<dbReference type="PIRSF" id="PIRSF039144">
    <property type="entry name" value="GlnB"/>
    <property type="match status" value="1"/>
</dbReference>
<dbReference type="PRINTS" id="PR00340">
    <property type="entry name" value="PIIGLNB"/>
</dbReference>
<dbReference type="SMART" id="SM00938">
    <property type="entry name" value="P-II"/>
    <property type="match status" value="1"/>
</dbReference>
<dbReference type="SUPFAM" id="SSF54913">
    <property type="entry name" value="GlnB-like"/>
    <property type="match status" value="1"/>
</dbReference>
<dbReference type="PROSITE" id="PS00638">
    <property type="entry name" value="PII_GLNB_CTER"/>
    <property type="match status" value="1"/>
</dbReference>
<dbReference type="PROSITE" id="PS51343">
    <property type="entry name" value="PII_GLNB_DOM"/>
    <property type="match status" value="1"/>
</dbReference>
<dbReference type="PROSITE" id="PS00496">
    <property type="entry name" value="PII_GLNB_UMP"/>
    <property type="match status" value="1"/>
</dbReference>
<proteinExistence type="inferred from homology"/>
<evidence type="ECO:0000250" key="1"/>
<evidence type="ECO:0000255" key="2">
    <source>
        <dbReference type="PROSITE-ProRule" id="PRU00675"/>
    </source>
</evidence>
<accession>P13556</accession>